<name>JSPR1_MOUSE</name>
<dbReference type="EMBL" id="AK009016">
    <property type="status" value="NOT_ANNOTATED_CDS"/>
    <property type="molecule type" value="mRNA"/>
</dbReference>
<dbReference type="EMBL" id="AK009578">
    <property type="protein sequence ID" value="BAB26371.1"/>
    <property type="molecule type" value="mRNA"/>
</dbReference>
<dbReference type="EMBL" id="BC104136">
    <property type="protein sequence ID" value="AAI04137.1"/>
    <property type="molecule type" value="mRNA"/>
</dbReference>
<dbReference type="EMBL" id="BC104137">
    <property type="protein sequence ID" value="AAI04138.1"/>
    <property type="molecule type" value="mRNA"/>
</dbReference>
<dbReference type="CCDS" id="CCDS24034.2">
    <molecule id="Q3MI48-1"/>
</dbReference>
<dbReference type="FunCoup" id="Q3MI48">
    <property type="interactions" value="51"/>
</dbReference>
<dbReference type="STRING" id="10090.ENSMUSP00000137666"/>
<dbReference type="iPTMnet" id="Q3MI48"/>
<dbReference type="PhosphoSitePlus" id="Q3MI48"/>
<dbReference type="jPOST" id="Q3MI48"/>
<dbReference type="PaxDb" id="10090-ENSMUSP00000137666"/>
<dbReference type="PeptideAtlas" id="Q3MI48"/>
<dbReference type="ProteomicsDB" id="269426">
    <molecule id="Q3MI48-1"/>
</dbReference>
<dbReference type="ProteomicsDB" id="269427">
    <molecule id="Q3MI48-2"/>
</dbReference>
<dbReference type="Antibodypedia" id="42291">
    <property type="antibodies" value="42 antibodies from 15 providers"/>
</dbReference>
<dbReference type="Ensembl" id="ENSMUST00000020435.11">
    <molecule id="Q3MI48-2"/>
    <property type="protein sequence ID" value="ENSMUSP00000020435.5"/>
    <property type="gene ID" value="ENSMUSG00000020216.14"/>
</dbReference>
<dbReference type="UCSC" id="uc007geu.2">
    <molecule id="Q3MI48-2"/>
    <property type="organism name" value="mouse"/>
</dbReference>
<dbReference type="AGR" id="MGI:1916700"/>
<dbReference type="MGI" id="MGI:1916700">
    <property type="gene designation" value="Jsrp1"/>
</dbReference>
<dbReference type="VEuPathDB" id="HostDB:ENSMUSG00000020216"/>
<dbReference type="eggNOG" id="ENOG502S4JK">
    <property type="taxonomic scope" value="Eukaryota"/>
</dbReference>
<dbReference type="GeneTree" id="ENSGT00390000012911"/>
<dbReference type="HOGENOM" id="CLU_073497_0_0_1"/>
<dbReference type="InParanoid" id="Q3MI48"/>
<dbReference type="PhylomeDB" id="Q3MI48"/>
<dbReference type="TreeFam" id="TF337976"/>
<dbReference type="ChiTaRS" id="Jsrp1">
    <property type="organism name" value="mouse"/>
</dbReference>
<dbReference type="PRO" id="PR:Q3MI48"/>
<dbReference type="Proteomes" id="UP000000589">
    <property type="component" value="Chromosome 10"/>
</dbReference>
<dbReference type="RNAct" id="Q3MI48">
    <property type="molecule type" value="protein"/>
</dbReference>
<dbReference type="Bgee" id="ENSMUSG00000020216">
    <property type="expression patterns" value="Expressed in hindlimb stylopod muscle and 80 other cell types or tissues"/>
</dbReference>
<dbReference type="ExpressionAtlas" id="Q3MI48">
    <property type="expression patterns" value="baseline and differential"/>
</dbReference>
<dbReference type="GO" id="GO:0016529">
    <property type="term" value="C:sarcoplasmic reticulum"/>
    <property type="evidence" value="ECO:0000314"/>
    <property type="project" value="MGI"/>
</dbReference>
<dbReference type="GO" id="GO:0033017">
    <property type="term" value="C:sarcoplasmic reticulum membrane"/>
    <property type="evidence" value="ECO:0007669"/>
    <property type="project" value="UniProtKB-SubCell"/>
</dbReference>
<dbReference type="GO" id="GO:0072657">
    <property type="term" value="P:protein localization to membrane"/>
    <property type="evidence" value="ECO:0000315"/>
    <property type="project" value="MGI"/>
</dbReference>
<dbReference type="GO" id="GO:0003009">
    <property type="term" value="P:skeletal muscle contraction"/>
    <property type="evidence" value="ECO:0000250"/>
    <property type="project" value="UniProtKB"/>
</dbReference>
<dbReference type="InterPro" id="IPR026178">
    <property type="entry name" value="JSRP1"/>
</dbReference>
<dbReference type="PANTHER" id="PTHR22397">
    <property type="entry name" value="JUNCTIONAL SARCOPLASMIC RETICULUM PROTEIN 1"/>
    <property type="match status" value="1"/>
</dbReference>
<dbReference type="PANTHER" id="PTHR22397:SF2">
    <property type="entry name" value="JUNCTIONAL SARCOPLASMIC RETICULUM PROTEIN 1"/>
    <property type="match status" value="1"/>
</dbReference>
<dbReference type="Pfam" id="PF15312">
    <property type="entry name" value="JSRP"/>
    <property type="match status" value="1"/>
</dbReference>
<protein>
    <recommendedName>
        <fullName>Junctional sarcoplasmic reticulum protein 1</fullName>
    </recommendedName>
    <alternativeName>
        <fullName>Junctional-face membrane protein of 45 kDa homolog</fullName>
        <shortName>JP-45</shortName>
    </alternativeName>
</protein>
<accession>Q3MI48</accession>
<accession>Q9D755</accession>
<feature type="chain" id="PRO_0000314026" description="Junctional sarcoplasmic reticulum protein 1">
    <location>
        <begin position="1"/>
        <end position="332"/>
    </location>
</feature>
<feature type="region of interest" description="Disordered" evidence="2">
    <location>
        <begin position="1"/>
        <end position="125"/>
    </location>
</feature>
<feature type="region of interest" description="Mediates interaction with CACNA1S">
    <location>
        <begin position="1"/>
        <end position="80"/>
    </location>
</feature>
<feature type="region of interest" description="Disordered" evidence="2">
    <location>
        <begin position="159"/>
        <end position="332"/>
    </location>
</feature>
<feature type="compositionally biased region" description="Basic and acidic residues" evidence="2">
    <location>
        <begin position="66"/>
        <end position="76"/>
    </location>
</feature>
<feature type="compositionally biased region" description="Pro residues" evidence="2">
    <location>
        <begin position="98"/>
        <end position="116"/>
    </location>
</feature>
<feature type="compositionally biased region" description="Pro residues" evidence="2">
    <location>
        <begin position="177"/>
        <end position="197"/>
    </location>
</feature>
<feature type="compositionally biased region" description="Low complexity" evidence="2">
    <location>
        <begin position="221"/>
        <end position="232"/>
    </location>
</feature>
<feature type="compositionally biased region" description="Basic and acidic residues" evidence="2">
    <location>
        <begin position="239"/>
        <end position="256"/>
    </location>
</feature>
<feature type="compositionally biased region" description="Basic and acidic residues" evidence="2">
    <location>
        <begin position="283"/>
        <end position="307"/>
    </location>
</feature>
<feature type="modified residue" description="Phosphothreonine" evidence="8">
    <location>
        <position position="51"/>
    </location>
</feature>
<feature type="modified residue" description="Phosphoserine" evidence="8">
    <location>
        <position position="223"/>
    </location>
</feature>
<feature type="modified residue" description="Phosphoserine" evidence="8">
    <location>
        <position position="228"/>
    </location>
</feature>
<feature type="splice variant" id="VSP_030199" description="In isoform 2." evidence="6">
    <location>
        <begin position="1"/>
        <end position="40"/>
    </location>
</feature>
<feature type="splice variant" id="VSP_030200" description="In isoform 2." evidence="6">
    <original>TSRRADSSDWTH</original>
    <variation>MLGTESWLPACW</variation>
    <location>
        <begin position="41"/>
        <end position="52"/>
    </location>
</feature>
<feature type="sequence conflict" description="In Ref. 3; AAI04137/AAI04138." evidence="7" ref="3">
    <original>R</original>
    <variation>P</variation>
    <location>
        <position position="34"/>
    </location>
</feature>
<gene>
    <name type="primary">Jsrp1</name>
    <name type="synonym">Jp45</name>
</gene>
<keyword id="KW-0025">Alternative splicing</keyword>
<keyword id="KW-0256">Endoplasmic reticulum</keyword>
<keyword id="KW-0472">Membrane</keyword>
<keyword id="KW-0597">Phosphoprotein</keyword>
<keyword id="KW-1185">Reference proteome</keyword>
<keyword id="KW-0703">Sarcoplasmic reticulum</keyword>
<organism>
    <name type="scientific">Mus musculus</name>
    <name type="common">Mouse</name>
    <dbReference type="NCBI Taxonomy" id="10090"/>
    <lineage>
        <taxon>Eukaryota</taxon>
        <taxon>Metazoa</taxon>
        <taxon>Chordata</taxon>
        <taxon>Craniata</taxon>
        <taxon>Vertebrata</taxon>
        <taxon>Euteleostomi</taxon>
        <taxon>Mammalia</taxon>
        <taxon>Eutheria</taxon>
        <taxon>Euarchontoglires</taxon>
        <taxon>Glires</taxon>
        <taxon>Rodentia</taxon>
        <taxon>Myomorpha</taxon>
        <taxon>Muroidea</taxon>
        <taxon>Muridae</taxon>
        <taxon>Murinae</taxon>
        <taxon>Mus</taxon>
        <taxon>Mus</taxon>
    </lineage>
</organism>
<sequence length="332" mass="36093">MTTRGLEDLDGGLGSCLPSDDLPFLEEPASGRRRESKARGTSRRADSSDWTHVLQDPVAAGAGDAGLKKMEKELAGKESTAGKAGTSPRIVPARRKPQAPPPLQPPPPPLQPPPRTPSDDLPWGDLTLNKCLVLASLVALLGSALQLCRDAVAGEVVAAPHPWVPPSSPPKKEASPAPKPPVLVSPSGSPQPKPGPPQARMQDEPELPGSPEATETRVERGGSISEASGEESVPLGDRGSQEKPRKEKPSKGEKLKKEKPRREKPRREDKSQVTGEPRQSLPRRWEAREGGRRPWGRDSRDLLEHGKLQAWAPRRRHDRDDRPRQKRGKGRD</sequence>
<comment type="function">
    <text evidence="1 4 5">Involved in skeletal muscle excitation/contraction coupling (EC), probably acting as a regulator of the voltage-sensitive calcium channel CACNA1S (By similarity). EC is a physiological process whereby an electrical signal (depolarization of the plasma membrane) is converted into a chemical signal, a calcium gradient, by the opening of ryanodine receptor calcium release channels. May regulate CACNA1S membrane targeting and activity.</text>
</comment>
<comment type="subunit">
    <text evidence="3 5">Interacts with CACNA1S, CACNB1 and calsequestrin.</text>
</comment>
<comment type="subcellular location">
    <subcellularLocation>
        <location>Sarcoplasmic reticulum membrane</location>
    </subcellularLocation>
    <subcellularLocation>
        <location>Endoplasmic reticulum membrane</location>
    </subcellularLocation>
    <text>Colocalizes with ryanodine receptors at the sarcoplasmic reticulum triad membranes.</text>
</comment>
<comment type="alternative products">
    <event type="alternative splicing"/>
    <isoform>
        <id>Q3MI48-1</id>
        <name>1</name>
        <sequence type="displayed"/>
    </isoform>
    <isoform>
        <id>Q3MI48-2</id>
        <name>2</name>
        <sequence type="described" ref="VSP_030199 VSP_030200"/>
    </isoform>
</comment>
<comment type="tissue specificity">
    <text evidence="3">Specifically expressed in skeletal muscle. Detected in skeletal muscle and tongue (at protein level).</text>
</comment>
<comment type="developmental stage">
    <text evidence="3">Expression appears in 17 dpc embryos, peaks 2 months after birth and decreases during aging.</text>
</comment>
<comment type="sequence caution" evidence="7">
    <conflict type="frameshift">
        <sequence resource="EMBL" id="AK009016"/>
    </conflict>
</comment>
<proteinExistence type="evidence at protein level"/>
<evidence type="ECO:0000250" key="1"/>
<evidence type="ECO:0000256" key="2">
    <source>
        <dbReference type="SAM" id="MobiDB-lite"/>
    </source>
</evidence>
<evidence type="ECO:0000269" key="3">
    <source>
    </source>
</evidence>
<evidence type="ECO:0000269" key="4">
    <source>
    </source>
</evidence>
<evidence type="ECO:0000269" key="5">
    <source>
    </source>
</evidence>
<evidence type="ECO:0000303" key="6">
    <source>
    </source>
</evidence>
<evidence type="ECO:0000305" key="7"/>
<evidence type="ECO:0007744" key="8">
    <source>
    </source>
</evidence>
<reference key="1">
    <citation type="journal article" date="2003" name="J. Biol. Chem.">
        <title>The novel skeletal muscle sarcoplasmic reticulum JP-45 protein. Molecular cloning, tissue distribution, developmental expression, and interaction with alpha 1.1 subunit of the voltage-gated calcium channel.</title>
        <authorList>
            <person name="Anderson A.A."/>
            <person name="Treves S."/>
            <person name="Biral D."/>
            <person name="Betto R."/>
            <person name="Sandona D."/>
            <person name="Ronjat M."/>
            <person name="Zorzato F."/>
        </authorList>
    </citation>
    <scope>NUCLEOTIDE SEQUENCE [MRNA] (ISOFORM 1)</scope>
    <scope>INTERACTION WITH CALSEQUESTRIN AND CACNA1S</scope>
    <scope>SUBCELLULAR LOCATION</scope>
    <scope>TISSUE SPECIFICITY</scope>
    <scope>DEVELOPMENTAL STAGE</scope>
    <source>
        <tissue>Skeletal muscle</tissue>
    </source>
</reference>
<reference key="2">
    <citation type="journal article" date="2005" name="Science">
        <title>The transcriptional landscape of the mammalian genome.</title>
        <authorList>
            <person name="Carninci P."/>
            <person name="Kasukawa T."/>
            <person name="Katayama S."/>
            <person name="Gough J."/>
            <person name="Frith M.C."/>
            <person name="Maeda N."/>
            <person name="Oyama R."/>
            <person name="Ravasi T."/>
            <person name="Lenhard B."/>
            <person name="Wells C."/>
            <person name="Kodzius R."/>
            <person name="Shimokawa K."/>
            <person name="Bajic V.B."/>
            <person name="Brenner S.E."/>
            <person name="Batalov S."/>
            <person name="Forrest A.R."/>
            <person name="Zavolan M."/>
            <person name="Davis M.J."/>
            <person name="Wilming L.G."/>
            <person name="Aidinis V."/>
            <person name="Allen J.E."/>
            <person name="Ambesi-Impiombato A."/>
            <person name="Apweiler R."/>
            <person name="Aturaliya R.N."/>
            <person name="Bailey T.L."/>
            <person name="Bansal M."/>
            <person name="Baxter L."/>
            <person name="Beisel K.W."/>
            <person name="Bersano T."/>
            <person name="Bono H."/>
            <person name="Chalk A.M."/>
            <person name="Chiu K.P."/>
            <person name="Choudhary V."/>
            <person name="Christoffels A."/>
            <person name="Clutterbuck D.R."/>
            <person name="Crowe M.L."/>
            <person name="Dalla E."/>
            <person name="Dalrymple B.P."/>
            <person name="de Bono B."/>
            <person name="Della Gatta G."/>
            <person name="di Bernardo D."/>
            <person name="Down T."/>
            <person name="Engstrom P."/>
            <person name="Fagiolini M."/>
            <person name="Faulkner G."/>
            <person name="Fletcher C.F."/>
            <person name="Fukushima T."/>
            <person name="Furuno M."/>
            <person name="Futaki S."/>
            <person name="Gariboldi M."/>
            <person name="Georgii-Hemming P."/>
            <person name="Gingeras T.R."/>
            <person name="Gojobori T."/>
            <person name="Green R.E."/>
            <person name="Gustincich S."/>
            <person name="Harbers M."/>
            <person name="Hayashi Y."/>
            <person name="Hensch T.K."/>
            <person name="Hirokawa N."/>
            <person name="Hill D."/>
            <person name="Huminiecki L."/>
            <person name="Iacono M."/>
            <person name="Ikeo K."/>
            <person name="Iwama A."/>
            <person name="Ishikawa T."/>
            <person name="Jakt M."/>
            <person name="Kanapin A."/>
            <person name="Katoh M."/>
            <person name="Kawasawa Y."/>
            <person name="Kelso J."/>
            <person name="Kitamura H."/>
            <person name="Kitano H."/>
            <person name="Kollias G."/>
            <person name="Krishnan S.P."/>
            <person name="Kruger A."/>
            <person name="Kummerfeld S.K."/>
            <person name="Kurochkin I.V."/>
            <person name="Lareau L.F."/>
            <person name="Lazarevic D."/>
            <person name="Lipovich L."/>
            <person name="Liu J."/>
            <person name="Liuni S."/>
            <person name="McWilliam S."/>
            <person name="Madan Babu M."/>
            <person name="Madera M."/>
            <person name="Marchionni L."/>
            <person name="Matsuda H."/>
            <person name="Matsuzawa S."/>
            <person name="Miki H."/>
            <person name="Mignone F."/>
            <person name="Miyake S."/>
            <person name="Morris K."/>
            <person name="Mottagui-Tabar S."/>
            <person name="Mulder N."/>
            <person name="Nakano N."/>
            <person name="Nakauchi H."/>
            <person name="Ng P."/>
            <person name="Nilsson R."/>
            <person name="Nishiguchi S."/>
            <person name="Nishikawa S."/>
            <person name="Nori F."/>
            <person name="Ohara O."/>
            <person name="Okazaki Y."/>
            <person name="Orlando V."/>
            <person name="Pang K.C."/>
            <person name="Pavan W.J."/>
            <person name="Pavesi G."/>
            <person name="Pesole G."/>
            <person name="Petrovsky N."/>
            <person name="Piazza S."/>
            <person name="Reed J."/>
            <person name="Reid J.F."/>
            <person name="Ring B.Z."/>
            <person name="Ringwald M."/>
            <person name="Rost B."/>
            <person name="Ruan Y."/>
            <person name="Salzberg S.L."/>
            <person name="Sandelin A."/>
            <person name="Schneider C."/>
            <person name="Schoenbach C."/>
            <person name="Sekiguchi K."/>
            <person name="Semple C.A."/>
            <person name="Seno S."/>
            <person name="Sessa L."/>
            <person name="Sheng Y."/>
            <person name="Shibata Y."/>
            <person name="Shimada H."/>
            <person name="Shimada K."/>
            <person name="Silva D."/>
            <person name="Sinclair B."/>
            <person name="Sperling S."/>
            <person name="Stupka E."/>
            <person name="Sugiura K."/>
            <person name="Sultana R."/>
            <person name="Takenaka Y."/>
            <person name="Taki K."/>
            <person name="Tammoja K."/>
            <person name="Tan S.L."/>
            <person name="Tang S."/>
            <person name="Taylor M.S."/>
            <person name="Tegner J."/>
            <person name="Teichmann S.A."/>
            <person name="Ueda H.R."/>
            <person name="van Nimwegen E."/>
            <person name="Verardo R."/>
            <person name="Wei C.L."/>
            <person name="Yagi K."/>
            <person name="Yamanishi H."/>
            <person name="Zabarovsky E."/>
            <person name="Zhu S."/>
            <person name="Zimmer A."/>
            <person name="Hide W."/>
            <person name="Bult C."/>
            <person name="Grimmond S.M."/>
            <person name="Teasdale R.D."/>
            <person name="Liu E.T."/>
            <person name="Brusic V."/>
            <person name="Quackenbush J."/>
            <person name="Wahlestedt C."/>
            <person name="Mattick J.S."/>
            <person name="Hume D.A."/>
            <person name="Kai C."/>
            <person name="Sasaki D."/>
            <person name="Tomaru Y."/>
            <person name="Fukuda S."/>
            <person name="Kanamori-Katayama M."/>
            <person name="Suzuki M."/>
            <person name="Aoki J."/>
            <person name="Arakawa T."/>
            <person name="Iida J."/>
            <person name="Imamura K."/>
            <person name="Itoh M."/>
            <person name="Kato T."/>
            <person name="Kawaji H."/>
            <person name="Kawagashira N."/>
            <person name="Kawashima T."/>
            <person name="Kojima M."/>
            <person name="Kondo S."/>
            <person name="Konno H."/>
            <person name="Nakano K."/>
            <person name="Ninomiya N."/>
            <person name="Nishio T."/>
            <person name="Okada M."/>
            <person name="Plessy C."/>
            <person name="Shibata K."/>
            <person name="Shiraki T."/>
            <person name="Suzuki S."/>
            <person name="Tagami M."/>
            <person name="Waki K."/>
            <person name="Watahiki A."/>
            <person name="Okamura-Oho Y."/>
            <person name="Suzuki H."/>
            <person name="Kawai J."/>
            <person name="Hayashizaki Y."/>
        </authorList>
    </citation>
    <scope>NUCLEOTIDE SEQUENCE [LARGE SCALE MRNA] (ISOFORMS 1 AND 2)</scope>
    <source>
        <strain>C57BL/6J</strain>
        <tissue>Tongue</tissue>
    </source>
</reference>
<reference key="3">
    <citation type="journal article" date="2004" name="Genome Res.">
        <title>The status, quality, and expansion of the NIH full-length cDNA project: the Mammalian Gene Collection (MGC).</title>
        <authorList>
            <consortium name="The MGC Project Team"/>
        </authorList>
    </citation>
    <scope>NUCLEOTIDE SEQUENCE [LARGE SCALE MRNA] OF 16-332 (ISOFORM 1)</scope>
</reference>
<reference key="4">
    <citation type="journal article" date="2006" name="J. Cell Sci.">
        <title>The junctional SR protein JP-45 affects the functional expression of the voltage-dependent Ca2+ channel Cav1.1.</title>
        <authorList>
            <person name="Anderson A.A."/>
            <person name="Altafaj X."/>
            <person name="Zheng Z."/>
            <person name="Wang Z.-M."/>
            <person name="Delbono O."/>
            <person name="Ronjat M."/>
            <person name="Treves S."/>
            <person name="Zorzato F."/>
        </authorList>
    </citation>
    <scope>FUNCTION</scope>
    <scope>INTERACTION WITH CACNA1S AND CACNB1</scope>
</reference>
<reference key="5">
    <citation type="journal article" date="2006" name="J. Physiol. (Lond.)">
        <title>A possible role of the junctional face protein JP-45 in modulating Ca2+ release in skeletal muscle.</title>
        <authorList>
            <person name="Gouadon E."/>
            <person name="Schuhmeier R.P."/>
            <person name="Ursu D."/>
            <person name="Anderson A.A."/>
            <person name="Treves S."/>
            <person name="Zorzato F."/>
            <person name="Lehmann-Horn F."/>
            <person name="Melzer W."/>
        </authorList>
    </citation>
    <scope>FUNCTION</scope>
    <scope>SUBCELLULAR LOCATION</scope>
</reference>
<reference key="6">
    <citation type="journal article" date="2010" name="Cell">
        <title>A tissue-specific atlas of mouse protein phosphorylation and expression.</title>
        <authorList>
            <person name="Huttlin E.L."/>
            <person name="Jedrychowski M.P."/>
            <person name="Elias J.E."/>
            <person name="Goswami T."/>
            <person name="Rad R."/>
            <person name="Beausoleil S.A."/>
            <person name="Villen J."/>
            <person name="Haas W."/>
            <person name="Sowa M.E."/>
            <person name="Gygi S.P."/>
        </authorList>
    </citation>
    <scope>PHOSPHORYLATION [LARGE SCALE ANALYSIS] AT THR-51; SER-223 AND SER-228</scope>
    <scope>IDENTIFICATION BY MASS SPECTROMETRY [LARGE SCALE ANALYSIS]</scope>
    <source>
        <tissue>Brown adipose tissue</tissue>
        <tissue>Lung</tissue>
    </source>
</reference>